<dbReference type="EMBL" id="AE014296">
    <property type="protein sequence ID" value="AAF52586.2"/>
    <property type="molecule type" value="Genomic_DNA"/>
</dbReference>
<dbReference type="EMBL" id="AE014134">
    <property type="protein sequence ID" value="AHN54248.1"/>
    <property type="molecule type" value="Genomic_DNA"/>
</dbReference>
<dbReference type="EMBL" id="BT056317">
    <property type="protein sequence ID" value="ACL81239.1"/>
    <property type="molecule type" value="mRNA"/>
</dbReference>
<dbReference type="RefSeq" id="NP_001285734.1">
    <property type="nucleotide sequence ID" value="NM_001298805.1"/>
</dbReference>
<dbReference type="RefSeq" id="NP_609170.1">
    <property type="nucleotide sequence ID" value="NM_135326.5"/>
</dbReference>
<dbReference type="SMR" id="Q9VLU6"/>
<dbReference type="BioGRID" id="60223">
    <property type="interactions" value="5"/>
</dbReference>
<dbReference type="FunCoup" id="Q9VLU6">
    <property type="interactions" value="581"/>
</dbReference>
<dbReference type="IntAct" id="Q9VLU6">
    <property type="interactions" value="3"/>
</dbReference>
<dbReference type="STRING" id="7227.FBpp0310037"/>
<dbReference type="PaxDb" id="7227-FBpp0079154"/>
<dbReference type="DNASU" id="34089"/>
<dbReference type="EnsemblMetazoa" id="FBtr0079532">
    <property type="protein sequence ID" value="FBpp0079154"/>
    <property type="gene ID" value="FBgn0031971"/>
</dbReference>
<dbReference type="EnsemblMetazoa" id="FBtr0343382">
    <property type="protein sequence ID" value="FBpp0310037"/>
    <property type="gene ID" value="FBgn0031971"/>
</dbReference>
<dbReference type="GeneID" id="34089"/>
<dbReference type="KEGG" id="dme:Dmel_CG7224"/>
<dbReference type="UCSC" id="CG7224-RA">
    <property type="organism name" value="d. melanogaster"/>
</dbReference>
<dbReference type="AGR" id="FB:FBgn0031971"/>
<dbReference type="CTD" id="34089"/>
<dbReference type="FlyBase" id="FBgn0031971">
    <property type="gene designation" value="Sirup"/>
</dbReference>
<dbReference type="VEuPathDB" id="VectorBase:FBgn0031971"/>
<dbReference type="eggNOG" id="KOG3245">
    <property type="taxonomic scope" value="Eukaryota"/>
</dbReference>
<dbReference type="GeneTree" id="ENSGT00390000009155"/>
<dbReference type="HOGENOM" id="CLU_160299_0_2_1"/>
<dbReference type="InParanoid" id="Q9VLU6"/>
<dbReference type="OMA" id="IVGKHPY"/>
<dbReference type="OrthoDB" id="201362at2759"/>
<dbReference type="PhylomeDB" id="Q9VLU6"/>
<dbReference type="SignaLink" id="Q9VLU6"/>
<dbReference type="BioGRID-ORCS" id="34089">
    <property type="hits" value="0 hits in 1 CRISPR screen"/>
</dbReference>
<dbReference type="ChiTaRS" id="Sirup">
    <property type="organism name" value="fly"/>
</dbReference>
<dbReference type="GenomeRNAi" id="34089"/>
<dbReference type="PRO" id="PR:Q9VLU6"/>
<dbReference type="Proteomes" id="UP000000803">
    <property type="component" value="Chromosome 2L"/>
</dbReference>
<dbReference type="Proteomes" id="UP000000803">
    <property type="component" value="Chromosome 3L"/>
</dbReference>
<dbReference type="Bgee" id="FBgn0031971">
    <property type="expression patterns" value="Expressed in epithelial cell in haltere and 276 other cell types or tissues"/>
</dbReference>
<dbReference type="ExpressionAtlas" id="Q9VLU6">
    <property type="expression patterns" value="baseline and differential"/>
</dbReference>
<dbReference type="GO" id="GO:0005759">
    <property type="term" value="C:mitochondrial matrix"/>
    <property type="evidence" value="ECO:0007669"/>
    <property type="project" value="UniProtKB-SubCell"/>
</dbReference>
<dbReference type="GO" id="GO:0005739">
    <property type="term" value="C:mitochondrion"/>
    <property type="evidence" value="ECO:0000250"/>
    <property type="project" value="FlyBase"/>
</dbReference>
<dbReference type="GO" id="GO:0008047">
    <property type="term" value="F:enzyme activator activity"/>
    <property type="evidence" value="ECO:0000315"/>
    <property type="project" value="UniProtKB"/>
</dbReference>
<dbReference type="GO" id="GO:0045333">
    <property type="term" value="P:cellular respiration"/>
    <property type="evidence" value="ECO:0000315"/>
    <property type="project" value="UniProtKB"/>
</dbReference>
<dbReference type="GO" id="GO:0034614">
    <property type="term" value="P:cellular response to reactive oxygen species"/>
    <property type="evidence" value="ECO:0000315"/>
    <property type="project" value="UniProtKB"/>
</dbReference>
<dbReference type="GO" id="GO:0034553">
    <property type="term" value="P:mitochondrial respiratory chain complex II assembly"/>
    <property type="evidence" value="ECO:0000316"/>
    <property type="project" value="UniProtKB"/>
</dbReference>
<dbReference type="GO" id="GO:1904231">
    <property type="term" value="P:positive regulation of succinate dehydrogenase activity"/>
    <property type="evidence" value="ECO:0000315"/>
    <property type="project" value="UniProtKB"/>
</dbReference>
<dbReference type="InterPro" id="IPR012875">
    <property type="entry name" value="SDHF4"/>
</dbReference>
<dbReference type="PANTHER" id="PTHR28524">
    <property type="entry name" value="SUCCINATE DEHYDROGENASE ASSEMBLY FACTOR 4, MITOCHONDRIAL"/>
    <property type="match status" value="1"/>
</dbReference>
<dbReference type="PANTHER" id="PTHR28524:SF3">
    <property type="entry name" value="SUCCINATE DEHYDROGENASE ASSEMBLY FACTOR 4, MITOCHONDRIAL"/>
    <property type="match status" value="1"/>
</dbReference>
<dbReference type="Pfam" id="PF07896">
    <property type="entry name" value="DUF1674"/>
    <property type="match status" value="1"/>
</dbReference>
<protein>
    <recommendedName>
        <fullName evidence="5">Succinate dehydrogenase assembly factor 4, mitochondrial</fullName>
        <shortName evidence="5">SDH assembly factor 4</shortName>
        <shortName evidence="5">SDHAF4</shortName>
    </recommendedName>
    <alternativeName>
        <fullName evidence="7">Starvation-upregulated protein</fullName>
    </alternativeName>
</protein>
<feature type="transit peptide" description="Mitochondrion" evidence="2">
    <location>
        <begin position="1"/>
        <end position="30"/>
    </location>
</feature>
<feature type="chain" id="PRO_0000431384" description="Succinate dehydrogenase assembly factor 4, mitochondrial">
    <location>
        <begin position="31"/>
        <end position="118"/>
    </location>
</feature>
<feature type="region of interest" description="Disordered" evidence="3">
    <location>
        <begin position="65"/>
        <end position="118"/>
    </location>
</feature>
<feature type="compositionally biased region" description="Basic and acidic residues" evidence="3">
    <location>
        <begin position="66"/>
        <end position="81"/>
    </location>
</feature>
<feature type="compositionally biased region" description="Basic and acidic residues" evidence="3">
    <location>
        <begin position="105"/>
        <end position="118"/>
    </location>
</feature>
<name>SDHF4_DROME</name>
<sequence>MQSVTRQTARVLPQMGKQVSYLSTSGAWRATASGGDMVVEIKEPKTRTEKLMAFQKKLRAKTPLGKLDEFSRHPYQEKEPLKPWPNQTNPYTGEIGGPAGPEPTRYGDWERKGRVSDF</sequence>
<accession>Q9VLU6</accession>
<comment type="function">
    <text evidence="1 4">Plays an essential role in the assembly of succinate dehydrogenase (SDH), an enzyme complex (also referred to as respiratory complex II) that is a component of both the tricarboxylic acid (TCA) cycle and the mitochondrial electron transport chain, and which couples the oxidation of succinate to fumarate with the reduction of ubiquinone (coenzyme Q) to ubiquinol (PubMed:24954416). Binds to the flavoprotein subunit SdhA in its FAD-bound form, blocking the generation of excess reactive oxygen species (ROS) and facilitating its assembly with the iron-sulfur protein subunit SdhB into the SDH catalytic dimer (By similarity).</text>
</comment>
<comment type="subunit">
    <text evidence="1">Interacts with SdhA in its FAD-bound form.</text>
</comment>
<comment type="subcellular location">
    <subcellularLocation>
        <location evidence="1">Mitochondrion matrix</location>
    </subcellularLocation>
</comment>
<comment type="similarity">
    <text evidence="6">Belongs to the SDHAF4 family.</text>
</comment>
<gene>
    <name evidence="7" type="primary">Sirup</name>
    <name evidence="5" type="synonym">Sdhaf4</name>
    <name evidence="7" type="ORF">CG7224</name>
</gene>
<organism>
    <name type="scientific">Drosophila melanogaster</name>
    <name type="common">Fruit fly</name>
    <dbReference type="NCBI Taxonomy" id="7227"/>
    <lineage>
        <taxon>Eukaryota</taxon>
        <taxon>Metazoa</taxon>
        <taxon>Ecdysozoa</taxon>
        <taxon>Arthropoda</taxon>
        <taxon>Hexapoda</taxon>
        <taxon>Insecta</taxon>
        <taxon>Pterygota</taxon>
        <taxon>Neoptera</taxon>
        <taxon>Endopterygota</taxon>
        <taxon>Diptera</taxon>
        <taxon>Brachycera</taxon>
        <taxon>Muscomorpha</taxon>
        <taxon>Ephydroidea</taxon>
        <taxon>Drosophilidae</taxon>
        <taxon>Drosophila</taxon>
        <taxon>Sophophora</taxon>
    </lineage>
</organism>
<evidence type="ECO:0000250" key="1">
    <source>
        <dbReference type="UniProtKB" id="P38345"/>
    </source>
</evidence>
<evidence type="ECO:0000255" key="2"/>
<evidence type="ECO:0000256" key="3">
    <source>
        <dbReference type="SAM" id="MobiDB-lite"/>
    </source>
</evidence>
<evidence type="ECO:0000269" key="4">
    <source>
    </source>
</evidence>
<evidence type="ECO:0000303" key="5">
    <source>
    </source>
</evidence>
<evidence type="ECO:0000305" key="6"/>
<evidence type="ECO:0000312" key="7">
    <source>
        <dbReference type="FlyBase" id="FBgn0031971"/>
    </source>
</evidence>
<keyword id="KW-0143">Chaperone</keyword>
<keyword id="KW-0496">Mitochondrion</keyword>
<keyword id="KW-1185">Reference proteome</keyword>
<keyword id="KW-0809">Transit peptide</keyword>
<proteinExistence type="inferred from homology"/>
<reference key="1">
    <citation type="journal article" date="2000" name="Science">
        <title>The genome sequence of Drosophila melanogaster.</title>
        <authorList>
            <person name="Adams M.D."/>
            <person name="Celniker S.E."/>
            <person name="Holt R.A."/>
            <person name="Evans C.A."/>
            <person name="Gocayne J.D."/>
            <person name="Amanatides P.G."/>
            <person name="Scherer S.E."/>
            <person name="Li P.W."/>
            <person name="Hoskins R.A."/>
            <person name="Galle R.F."/>
            <person name="George R.A."/>
            <person name="Lewis S.E."/>
            <person name="Richards S."/>
            <person name="Ashburner M."/>
            <person name="Henderson S.N."/>
            <person name="Sutton G.G."/>
            <person name="Wortman J.R."/>
            <person name="Yandell M.D."/>
            <person name="Zhang Q."/>
            <person name="Chen L.X."/>
            <person name="Brandon R.C."/>
            <person name="Rogers Y.-H.C."/>
            <person name="Blazej R.G."/>
            <person name="Champe M."/>
            <person name="Pfeiffer B.D."/>
            <person name="Wan K.H."/>
            <person name="Doyle C."/>
            <person name="Baxter E.G."/>
            <person name="Helt G."/>
            <person name="Nelson C.R."/>
            <person name="Miklos G.L.G."/>
            <person name="Abril J.F."/>
            <person name="Agbayani A."/>
            <person name="An H.-J."/>
            <person name="Andrews-Pfannkoch C."/>
            <person name="Baldwin D."/>
            <person name="Ballew R.M."/>
            <person name="Basu A."/>
            <person name="Baxendale J."/>
            <person name="Bayraktaroglu L."/>
            <person name="Beasley E.M."/>
            <person name="Beeson K.Y."/>
            <person name="Benos P.V."/>
            <person name="Berman B.P."/>
            <person name="Bhandari D."/>
            <person name="Bolshakov S."/>
            <person name="Borkova D."/>
            <person name="Botchan M.R."/>
            <person name="Bouck J."/>
            <person name="Brokstein P."/>
            <person name="Brottier P."/>
            <person name="Burtis K.C."/>
            <person name="Busam D.A."/>
            <person name="Butler H."/>
            <person name="Cadieu E."/>
            <person name="Center A."/>
            <person name="Chandra I."/>
            <person name="Cherry J.M."/>
            <person name="Cawley S."/>
            <person name="Dahlke C."/>
            <person name="Davenport L.B."/>
            <person name="Davies P."/>
            <person name="de Pablos B."/>
            <person name="Delcher A."/>
            <person name="Deng Z."/>
            <person name="Mays A.D."/>
            <person name="Dew I."/>
            <person name="Dietz S.M."/>
            <person name="Dodson K."/>
            <person name="Doup L.E."/>
            <person name="Downes M."/>
            <person name="Dugan-Rocha S."/>
            <person name="Dunkov B.C."/>
            <person name="Dunn P."/>
            <person name="Durbin K.J."/>
            <person name="Evangelista C.C."/>
            <person name="Ferraz C."/>
            <person name="Ferriera S."/>
            <person name="Fleischmann W."/>
            <person name="Fosler C."/>
            <person name="Gabrielian A.E."/>
            <person name="Garg N.S."/>
            <person name="Gelbart W.M."/>
            <person name="Glasser K."/>
            <person name="Glodek A."/>
            <person name="Gong F."/>
            <person name="Gorrell J.H."/>
            <person name="Gu Z."/>
            <person name="Guan P."/>
            <person name="Harris M."/>
            <person name="Harris N.L."/>
            <person name="Harvey D.A."/>
            <person name="Heiman T.J."/>
            <person name="Hernandez J.R."/>
            <person name="Houck J."/>
            <person name="Hostin D."/>
            <person name="Houston K.A."/>
            <person name="Howland T.J."/>
            <person name="Wei M.-H."/>
            <person name="Ibegwam C."/>
            <person name="Jalali M."/>
            <person name="Kalush F."/>
            <person name="Karpen G.H."/>
            <person name="Ke Z."/>
            <person name="Kennison J.A."/>
            <person name="Ketchum K.A."/>
            <person name="Kimmel B.E."/>
            <person name="Kodira C.D."/>
            <person name="Kraft C.L."/>
            <person name="Kravitz S."/>
            <person name="Kulp D."/>
            <person name="Lai Z."/>
            <person name="Lasko P."/>
            <person name="Lei Y."/>
            <person name="Levitsky A.A."/>
            <person name="Li J.H."/>
            <person name="Li Z."/>
            <person name="Liang Y."/>
            <person name="Lin X."/>
            <person name="Liu X."/>
            <person name="Mattei B."/>
            <person name="McIntosh T.C."/>
            <person name="McLeod M.P."/>
            <person name="McPherson D."/>
            <person name="Merkulov G."/>
            <person name="Milshina N.V."/>
            <person name="Mobarry C."/>
            <person name="Morris J."/>
            <person name="Moshrefi A."/>
            <person name="Mount S.M."/>
            <person name="Moy M."/>
            <person name="Murphy B."/>
            <person name="Murphy L."/>
            <person name="Muzny D.M."/>
            <person name="Nelson D.L."/>
            <person name="Nelson D.R."/>
            <person name="Nelson K.A."/>
            <person name="Nixon K."/>
            <person name="Nusskern D.R."/>
            <person name="Pacleb J.M."/>
            <person name="Palazzolo M."/>
            <person name="Pittman G.S."/>
            <person name="Pan S."/>
            <person name="Pollard J."/>
            <person name="Puri V."/>
            <person name="Reese M.G."/>
            <person name="Reinert K."/>
            <person name="Remington K."/>
            <person name="Saunders R.D.C."/>
            <person name="Scheeler F."/>
            <person name="Shen H."/>
            <person name="Shue B.C."/>
            <person name="Siden-Kiamos I."/>
            <person name="Simpson M."/>
            <person name="Skupski M.P."/>
            <person name="Smith T.J."/>
            <person name="Spier E."/>
            <person name="Spradling A.C."/>
            <person name="Stapleton M."/>
            <person name="Strong R."/>
            <person name="Sun E."/>
            <person name="Svirskas R."/>
            <person name="Tector C."/>
            <person name="Turner R."/>
            <person name="Venter E."/>
            <person name="Wang A.H."/>
            <person name="Wang X."/>
            <person name="Wang Z.-Y."/>
            <person name="Wassarman D.A."/>
            <person name="Weinstock G.M."/>
            <person name="Weissenbach J."/>
            <person name="Williams S.M."/>
            <person name="Woodage T."/>
            <person name="Worley K.C."/>
            <person name="Wu D."/>
            <person name="Yang S."/>
            <person name="Yao Q.A."/>
            <person name="Ye J."/>
            <person name="Yeh R.-F."/>
            <person name="Zaveri J.S."/>
            <person name="Zhan M."/>
            <person name="Zhang G."/>
            <person name="Zhao Q."/>
            <person name="Zheng L."/>
            <person name="Zheng X.H."/>
            <person name="Zhong F.N."/>
            <person name="Zhong W."/>
            <person name="Zhou X."/>
            <person name="Zhu S.C."/>
            <person name="Zhu X."/>
            <person name="Smith H.O."/>
            <person name="Gibbs R.A."/>
            <person name="Myers E.W."/>
            <person name="Rubin G.M."/>
            <person name="Venter J.C."/>
        </authorList>
    </citation>
    <scope>NUCLEOTIDE SEQUENCE [LARGE SCALE GENOMIC DNA]</scope>
    <source>
        <strain>Berkeley</strain>
    </source>
</reference>
<reference key="2">
    <citation type="journal article" date="2002" name="Genome Biol.">
        <title>Annotation of the Drosophila melanogaster euchromatic genome: a systematic review.</title>
        <authorList>
            <person name="Misra S."/>
            <person name="Crosby M.A."/>
            <person name="Mungall C.J."/>
            <person name="Matthews B.B."/>
            <person name="Campbell K.S."/>
            <person name="Hradecky P."/>
            <person name="Huang Y."/>
            <person name="Kaminker J.S."/>
            <person name="Millburn G.H."/>
            <person name="Prochnik S.E."/>
            <person name="Smith C.D."/>
            <person name="Tupy J.L."/>
            <person name="Whitfield E.J."/>
            <person name="Bayraktaroglu L."/>
            <person name="Berman B.P."/>
            <person name="Bettencourt B.R."/>
            <person name="Celniker S.E."/>
            <person name="de Grey A.D.N.J."/>
            <person name="Drysdale R.A."/>
            <person name="Harris N.L."/>
            <person name="Richter J."/>
            <person name="Russo S."/>
            <person name="Schroeder A.J."/>
            <person name="Shu S.Q."/>
            <person name="Stapleton M."/>
            <person name="Yamada C."/>
            <person name="Ashburner M."/>
            <person name="Gelbart W.M."/>
            <person name="Rubin G.M."/>
            <person name="Lewis S.E."/>
        </authorList>
    </citation>
    <scope>GENOME REANNOTATION</scope>
    <source>
        <strain>Berkeley</strain>
    </source>
</reference>
<reference key="3">
    <citation type="submission" date="2009-01" db="EMBL/GenBank/DDBJ databases">
        <authorList>
            <person name="Carlson J."/>
            <person name="Booth B."/>
            <person name="Frise E."/>
            <person name="Park S."/>
            <person name="Wan K."/>
            <person name="Yu C."/>
            <person name="Celniker S."/>
        </authorList>
    </citation>
    <scope>NUCLEOTIDE SEQUENCE [LARGE SCALE MRNA]</scope>
</reference>
<reference key="4">
    <citation type="journal article" date="2014" name="Cell Metab.">
        <title>SDHAF4 promotes mitochondrial succinate dehydrogenase activity and prevents neurodegeneration.</title>
        <authorList>
            <person name="Van Vranken J.G."/>
            <person name="Bricker D.K."/>
            <person name="Dephoure N."/>
            <person name="Gygi S.P."/>
            <person name="Cox J.E."/>
            <person name="Thummel C.S."/>
            <person name="Rutter J."/>
        </authorList>
    </citation>
    <scope>FUNCTION</scope>
</reference>